<evidence type="ECO:0000255" key="1">
    <source>
        <dbReference type="HAMAP-Rule" id="MF_00366"/>
    </source>
</evidence>
<evidence type="ECO:0000256" key="2">
    <source>
        <dbReference type="SAM" id="MobiDB-lite"/>
    </source>
</evidence>
<proteinExistence type="inferred from homology"/>
<keyword id="KW-0240">DNA-directed RNA polymerase</keyword>
<keyword id="KW-0548">Nucleotidyltransferase</keyword>
<keyword id="KW-1185">Reference proteome</keyword>
<keyword id="KW-0804">Transcription</keyword>
<keyword id="KW-0808">Transferase</keyword>
<feature type="chain" id="PRO_1000059914" description="DNA-directed RNA polymerase subunit omega">
    <location>
        <begin position="1"/>
        <end position="104"/>
    </location>
</feature>
<feature type="region of interest" description="Disordered" evidence="2">
    <location>
        <begin position="53"/>
        <end position="104"/>
    </location>
</feature>
<feature type="compositionally biased region" description="Basic and acidic residues" evidence="2">
    <location>
        <begin position="63"/>
        <end position="104"/>
    </location>
</feature>
<gene>
    <name evidence="1" type="primary">rpoZ</name>
    <name type="ordered locus">SPD_1547</name>
</gene>
<sequence length="104" mass="11924">MMLKPSIDTLLDKVPSKYSLVILEAKRAHELEAGAPATQGFKSEKSTLRALEEIESGNVTIHPDPEGKREAVRRRIEEEKRRKEEEEKKIKEQIAKEKEDGEKI</sequence>
<protein>
    <recommendedName>
        <fullName evidence="1">DNA-directed RNA polymerase subunit omega</fullName>
        <shortName evidence="1">RNAP omega subunit</shortName>
        <ecNumber evidence="1">2.7.7.6</ecNumber>
    </recommendedName>
    <alternativeName>
        <fullName evidence="1">RNA polymerase omega subunit</fullName>
    </alternativeName>
    <alternativeName>
        <fullName evidence="1">Transcriptase subunit omega</fullName>
    </alternativeName>
</protein>
<reference key="1">
    <citation type="journal article" date="2007" name="J. Bacteriol.">
        <title>Genome sequence of Avery's virulent serotype 2 strain D39 of Streptococcus pneumoniae and comparison with that of unencapsulated laboratory strain R6.</title>
        <authorList>
            <person name="Lanie J.A."/>
            <person name="Ng W.-L."/>
            <person name="Kazmierczak K.M."/>
            <person name="Andrzejewski T.M."/>
            <person name="Davidsen T.M."/>
            <person name="Wayne K.J."/>
            <person name="Tettelin H."/>
            <person name="Glass J.I."/>
            <person name="Winkler M.E."/>
        </authorList>
    </citation>
    <scope>NUCLEOTIDE SEQUENCE [LARGE SCALE GENOMIC DNA]</scope>
    <source>
        <strain>D39 / NCTC 7466</strain>
    </source>
</reference>
<comment type="function">
    <text evidence="1">Promotes RNA polymerase assembly. Latches the N- and C-terminal regions of the beta' subunit thereby facilitating its interaction with the beta and alpha subunits.</text>
</comment>
<comment type="catalytic activity">
    <reaction evidence="1">
        <text>RNA(n) + a ribonucleoside 5'-triphosphate = RNA(n+1) + diphosphate</text>
        <dbReference type="Rhea" id="RHEA:21248"/>
        <dbReference type="Rhea" id="RHEA-COMP:14527"/>
        <dbReference type="Rhea" id="RHEA-COMP:17342"/>
        <dbReference type="ChEBI" id="CHEBI:33019"/>
        <dbReference type="ChEBI" id="CHEBI:61557"/>
        <dbReference type="ChEBI" id="CHEBI:140395"/>
        <dbReference type="EC" id="2.7.7.6"/>
    </reaction>
</comment>
<comment type="subunit">
    <text evidence="1">The RNAP catalytic core consists of 2 alpha, 1 beta, 1 beta' and 1 omega subunit. When a sigma factor is associated with the core the holoenzyme is formed, which can initiate transcription.</text>
</comment>
<comment type="similarity">
    <text evidence="1">Belongs to the RNA polymerase subunit omega family.</text>
</comment>
<name>RPOZ_STRP2</name>
<organism>
    <name type="scientific">Streptococcus pneumoniae serotype 2 (strain D39 / NCTC 7466)</name>
    <dbReference type="NCBI Taxonomy" id="373153"/>
    <lineage>
        <taxon>Bacteria</taxon>
        <taxon>Bacillati</taxon>
        <taxon>Bacillota</taxon>
        <taxon>Bacilli</taxon>
        <taxon>Lactobacillales</taxon>
        <taxon>Streptococcaceae</taxon>
        <taxon>Streptococcus</taxon>
    </lineage>
</organism>
<dbReference type="EC" id="2.7.7.6" evidence="1"/>
<dbReference type="EMBL" id="CP000410">
    <property type="protein sequence ID" value="ABJ53875.1"/>
    <property type="molecule type" value="Genomic_DNA"/>
</dbReference>
<dbReference type="RefSeq" id="WP_000979235.1">
    <property type="nucleotide sequence ID" value="NZ_JAMLJR010000003.1"/>
</dbReference>
<dbReference type="SMR" id="Q04J38"/>
<dbReference type="PaxDb" id="373153-SPD_1547"/>
<dbReference type="GeneID" id="93739175"/>
<dbReference type="KEGG" id="spd:SPD_1547"/>
<dbReference type="eggNOG" id="COG1758">
    <property type="taxonomic scope" value="Bacteria"/>
</dbReference>
<dbReference type="HOGENOM" id="CLU_125406_0_0_9"/>
<dbReference type="BioCyc" id="SPNE373153:G1G6V-1670-MONOMER"/>
<dbReference type="Proteomes" id="UP000001452">
    <property type="component" value="Chromosome"/>
</dbReference>
<dbReference type="GO" id="GO:0000428">
    <property type="term" value="C:DNA-directed RNA polymerase complex"/>
    <property type="evidence" value="ECO:0007669"/>
    <property type="project" value="UniProtKB-KW"/>
</dbReference>
<dbReference type="GO" id="GO:0003677">
    <property type="term" value="F:DNA binding"/>
    <property type="evidence" value="ECO:0007669"/>
    <property type="project" value="UniProtKB-UniRule"/>
</dbReference>
<dbReference type="GO" id="GO:0003899">
    <property type="term" value="F:DNA-directed RNA polymerase activity"/>
    <property type="evidence" value="ECO:0007669"/>
    <property type="project" value="UniProtKB-UniRule"/>
</dbReference>
<dbReference type="GO" id="GO:0006351">
    <property type="term" value="P:DNA-templated transcription"/>
    <property type="evidence" value="ECO:0007669"/>
    <property type="project" value="UniProtKB-UniRule"/>
</dbReference>
<dbReference type="Gene3D" id="3.90.940.10">
    <property type="match status" value="1"/>
</dbReference>
<dbReference type="HAMAP" id="MF_00366">
    <property type="entry name" value="RNApol_bact_RpoZ"/>
    <property type="match status" value="1"/>
</dbReference>
<dbReference type="InterPro" id="IPR003716">
    <property type="entry name" value="DNA-dir_RNA_pol_omega"/>
</dbReference>
<dbReference type="InterPro" id="IPR006110">
    <property type="entry name" value="Pol_omega/Rpo6/RPB6"/>
</dbReference>
<dbReference type="InterPro" id="IPR036161">
    <property type="entry name" value="RPB6/omega-like_sf"/>
</dbReference>
<dbReference type="NCBIfam" id="TIGR00690">
    <property type="entry name" value="rpoZ"/>
    <property type="match status" value="1"/>
</dbReference>
<dbReference type="PANTHER" id="PTHR34476">
    <property type="entry name" value="DNA-DIRECTED RNA POLYMERASE SUBUNIT OMEGA"/>
    <property type="match status" value="1"/>
</dbReference>
<dbReference type="PANTHER" id="PTHR34476:SF1">
    <property type="entry name" value="DNA-DIRECTED RNA POLYMERASE SUBUNIT OMEGA"/>
    <property type="match status" value="1"/>
</dbReference>
<dbReference type="Pfam" id="PF01192">
    <property type="entry name" value="RNA_pol_Rpb6"/>
    <property type="match status" value="1"/>
</dbReference>
<dbReference type="SMART" id="SM01409">
    <property type="entry name" value="RNA_pol_Rpb6"/>
    <property type="match status" value="1"/>
</dbReference>
<dbReference type="SUPFAM" id="SSF63562">
    <property type="entry name" value="RPB6/omega subunit-like"/>
    <property type="match status" value="1"/>
</dbReference>
<accession>Q04J38</accession>